<name>MAOC_MAIZE</name>
<evidence type="ECO:0000250" key="1"/>
<evidence type="ECO:0000255" key="2"/>
<evidence type="ECO:0000256" key="3">
    <source>
        <dbReference type="SAM" id="MobiDB-lite"/>
    </source>
</evidence>
<evidence type="ECO:0000269" key="4">
    <source>
    </source>
</evidence>
<evidence type="ECO:0000269" key="5">
    <source>
    </source>
</evidence>
<evidence type="ECO:0000269" key="6">
    <source>
    </source>
</evidence>
<evidence type="ECO:0000303" key="7">
    <source>
    </source>
</evidence>
<evidence type="ECO:0000305" key="8"/>
<evidence type="ECO:0007829" key="9">
    <source>
        <dbReference type="PDB" id="5OU5"/>
    </source>
</evidence>
<organism>
    <name type="scientific">Zea mays</name>
    <name type="common">Maize</name>
    <dbReference type="NCBI Taxonomy" id="4577"/>
    <lineage>
        <taxon>Eukaryota</taxon>
        <taxon>Viridiplantae</taxon>
        <taxon>Streptophyta</taxon>
        <taxon>Embryophyta</taxon>
        <taxon>Tracheophyta</taxon>
        <taxon>Spermatophyta</taxon>
        <taxon>Magnoliopsida</taxon>
        <taxon>Liliopsida</taxon>
        <taxon>Poales</taxon>
        <taxon>Poaceae</taxon>
        <taxon>PACMAD clade</taxon>
        <taxon>Panicoideae</taxon>
        <taxon>Andropogonodae</taxon>
        <taxon>Andropogoneae</taxon>
        <taxon>Tripsacinae</taxon>
        <taxon>Zea</taxon>
    </lineage>
</organism>
<reference key="1">
    <citation type="journal article" date="1989" name="J. Biol. Chem.">
        <title>Primary structure of the maize NADP-dependent malic enzyme.</title>
        <authorList>
            <person name="Rothermel B.A."/>
            <person name="Nelson T."/>
        </authorList>
    </citation>
    <scope>NUCLEOTIDE SEQUENCE [MRNA]</scope>
    <source>
        <strain>cv. B73 Inbred</strain>
    </source>
</reference>
<reference key="2">
    <citation type="journal article" date="2003" name="J. Biol. Chem.">
        <title>Maize C4 NADP-malic enzyme. Expression in Escherichia coli and characterization of site-directed mutants at the putative nucleoside-binding sites.</title>
        <authorList>
            <person name="Detarsio E."/>
            <person name="Wheeler M.C."/>
            <person name="Campos-Bermudez V.A."/>
            <person name="Andreo C.S."/>
            <person name="Drincovich M.F."/>
        </authorList>
    </citation>
    <scope>MUTAGENESIS OF ARG-237; ALA-387 AND ALA-392</scope>
</reference>
<reference key="3">
    <citation type="journal article" date="2004" name="Biochem. J.">
        <title>Basic residues play key roles in catalysis and NADP(+)-specificity in maize (Zea mays L.) photosynthetic NADP(+)-dependent malic enzyme.</title>
        <authorList>
            <person name="Detarsio E."/>
            <person name="Andreo C.S."/>
            <person name="Drincovich M.F."/>
        </authorList>
    </citation>
    <scope>MUTAGENESIS OF LYS-255 AND 435-LYS-LYS-436</scope>
    <scope>3D-STRUCTURE MODELING</scope>
</reference>
<reference key="4">
    <citation type="journal article" date="2019" name="Nat. Plants">
        <title>Molecular adaptations of NADP-malic enzyme for its function in C4 photosynthesis in grasses.</title>
        <authorList>
            <person name="Alvarez C.E."/>
            <person name="Bovdilova A."/>
            <person name="Hoppner A."/>
            <person name="Wolff C.C."/>
            <person name="Saigo M."/>
            <person name="Trajtenberg F."/>
            <person name="Zhang T."/>
            <person name="Buschiazzo A."/>
            <person name="Nagel-Steger L."/>
            <person name="Drincovich M.F."/>
            <person name="Lercher M.J."/>
            <person name="Maurino V.G."/>
        </authorList>
    </citation>
    <scope>X-RAY CRYSTALLOGRAPHY (2.20 ANGSTROMS) OF 62-636</scope>
    <scope>FUNCTION</scope>
    <scope>CATALYTIC ACTIVITY</scope>
    <scope>BIOPHYSICOCHEMICAL PROPERTIES</scope>
    <scope>SUBUNIT</scope>
    <scope>MUTAGENESIS OF PHE-140; GLU-339; GLN-503 AND LEU-544</scope>
</reference>
<accession>P16243</accession>
<protein>
    <recommendedName>
        <fullName evidence="8">NADP-dependent malic enzyme, chloroplastic</fullName>
        <shortName evidence="7">NADP-ME</shortName>
        <ecNumber evidence="6">1.1.1.40</ecNumber>
    </recommendedName>
</protein>
<dbReference type="EC" id="1.1.1.40" evidence="6"/>
<dbReference type="EMBL" id="J05130">
    <property type="protein sequence ID" value="AAA33487.1"/>
    <property type="molecule type" value="mRNA"/>
</dbReference>
<dbReference type="PIR" id="A34482">
    <property type="entry name" value="DEZMMX"/>
</dbReference>
<dbReference type="RefSeq" id="NP_001105313.1">
    <property type="nucleotide sequence ID" value="NM_001111843.1"/>
</dbReference>
<dbReference type="PDB" id="5OU5">
    <property type="method" value="X-ray"/>
    <property type="resolution" value="2.20 A"/>
    <property type="chains" value="A/B/C/D=62-636"/>
</dbReference>
<dbReference type="PDB" id="9E6M">
    <property type="method" value="X-ray"/>
    <property type="resolution" value="2.70 A"/>
    <property type="chains" value="A/B/C/D=62-636"/>
</dbReference>
<dbReference type="PDBsum" id="5OU5"/>
<dbReference type="PDBsum" id="9E6M"/>
<dbReference type="SMR" id="P16243"/>
<dbReference type="STRING" id="4577.P16243"/>
<dbReference type="PaxDb" id="4577-GRMZM2G085019_P01"/>
<dbReference type="GeneID" id="542233"/>
<dbReference type="KEGG" id="zma:542233"/>
<dbReference type="MaizeGDB" id="13848"/>
<dbReference type="eggNOG" id="KOG1257">
    <property type="taxonomic scope" value="Eukaryota"/>
</dbReference>
<dbReference type="InParanoid" id="P16243"/>
<dbReference type="OrthoDB" id="5365701at2759"/>
<dbReference type="BRENDA" id="1.1.1.40">
    <property type="organism ID" value="6752"/>
</dbReference>
<dbReference type="SABIO-RK" id="P16243"/>
<dbReference type="UniPathway" id="UPA00322"/>
<dbReference type="Proteomes" id="UP000007305">
    <property type="component" value="Unplaced"/>
</dbReference>
<dbReference type="ExpressionAtlas" id="P16243">
    <property type="expression patterns" value="baseline and differential"/>
</dbReference>
<dbReference type="GO" id="GO:0009507">
    <property type="term" value="C:chloroplast"/>
    <property type="evidence" value="ECO:0000318"/>
    <property type="project" value="GO_Central"/>
</dbReference>
<dbReference type="GO" id="GO:0004473">
    <property type="term" value="F:malate dehydrogenase (decarboxylating) (NADP+) activity"/>
    <property type="evidence" value="ECO:0000318"/>
    <property type="project" value="GO_Central"/>
</dbReference>
<dbReference type="GO" id="GO:0046872">
    <property type="term" value="F:metal ion binding"/>
    <property type="evidence" value="ECO:0007669"/>
    <property type="project" value="UniProtKB-KW"/>
</dbReference>
<dbReference type="GO" id="GO:0051287">
    <property type="term" value="F:NAD binding"/>
    <property type="evidence" value="ECO:0007669"/>
    <property type="project" value="InterPro"/>
</dbReference>
<dbReference type="GO" id="GO:0008948">
    <property type="term" value="F:oxaloacetate decarboxylase activity"/>
    <property type="evidence" value="ECO:0007669"/>
    <property type="project" value="RHEA"/>
</dbReference>
<dbReference type="GO" id="GO:0006108">
    <property type="term" value="P:malate metabolic process"/>
    <property type="evidence" value="ECO:0000318"/>
    <property type="project" value="GO_Central"/>
</dbReference>
<dbReference type="GO" id="GO:0006090">
    <property type="term" value="P:pyruvate metabolic process"/>
    <property type="evidence" value="ECO:0000318"/>
    <property type="project" value="GO_Central"/>
</dbReference>
<dbReference type="CDD" id="cd05312">
    <property type="entry name" value="NAD_bind_1_malic_enz"/>
    <property type="match status" value="1"/>
</dbReference>
<dbReference type="FunFam" id="3.40.50.10380:FF:000002">
    <property type="entry name" value="Malic enzyme"/>
    <property type="match status" value="1"/>
</dbReference>
<dbReference type="FunFam" id="3.40.50.720:FF:000067">
    <property type="entry name" value="Malic enzyme"/>
    <property type="match status" value="1"/>
</dbReference>
<dbReference type="Gene3D" id="3.40.50.10380">
    <property type="entry name" value="Malic enzyme, N-terminal domain"/>
    <property type="match status" value="1"/>
</dbReference>
<dbReference type="Gene3D" id="3.40.50.720">
    <property type="entry name" value="NAD(P)-binding Rossmann-like Domain"/>
    <property type="match status" value="1"/>
</dbReference>
<dbReference type="InterPro" id="IPR046346">
    <property type="entry name" value="Aminoacid_DH-like_N_sf"/>
</dbReference>
<dbReference type="InterPro" id="IPR015884">
    <property type="entry name" value="Malic_enzyme_CS"/>
</dbReference>
<dbReference type="InterPro" id="IPR012301">
    <property type="entry name" value="Malic_N_dom"/>
</dbReference>
<dbReference type="InterPro" id="IPR037062">
    <property type="entry name" value="Malic_N_dom_sf"/>
</dbReference>
<dbReference type="InterPro" id="IPR012302">
    <property type="entry name" value="Malic_NAD-bd"/>
</dbReference>
<dbReference type="InterPro" id="IPR001891">
    <property type="entry name" value="Malic_OxRdtase"/>
</dbReference>
<dbReference type="InterPro" id="IPR036291">
    <property type="entry name" value="NAD(P)-bd_dom_sf"/>
</dbReference>
<dbReference type="NCBIfam" id="NF010052">
    <property type="entry name" value="PRK13529.1"/>
    <property type="match status" value="1"/>
</dbReference>
<dbReference type="PANTHER" id="PTHR23406">
    <property type="entry name" value="MALIC ENZYME-RELATED"/>
    <property type="match status" value="1"/>
</dbReference>
<dbReference type="PANTHER" id="PTHR23406:SF69">
    <property type="entry name" value="NADP-DEPENDENT MALIC ENZYME, CHLOROPLASTIC"/>
    <property type="match status" value="1"/>
</dbReference>
<dbReference type="Pfam" id="PF00390">
    <property type="entry name" value="malic"/>
    <property type="match status" value="1"/>
</dbReference>
<dbReference type="Pfam" id="PF03949">
    <property type="entry name" value="Malic_M"/>
    <property type="match status" value="1"/>
</dbReference>
<dbReference type="PIRSF" id="PIRSF000106">
    <property type="entry name" value="ME"/>
    <property type="match status" value="1"/>
</dbReference>
<dbReference type="PRINTS" id="PR00072">
    <property type="entry name" value="MALOXRDTASE"/>
</dbReference>
<dbReference type="SMART" id="SM01274">
    <property type="entry name" value="malic"/>
    <property type="match status" value="1"/>
</dbReference>
<dbReference type="SMART" id="SM00919">
    <property type="entry name" value="Malic_M"/>
    <property type="match status" value="1"/>
</dbReference>
<dbReference type="SUPFAM" id="SSF53223">
    <property type="entry name" value="Aminoacid dehydrogenase-like, N-terminal domain"/>
    <property type="match status" value="1"/>
</dbReference>
<dbReference type="SUPFAM" id="SSF51735">
    <property type="entry name" value="NAD(P)-binding Rossmann-fold domains"/>
    <property type="match status" value="1"/>
</dbReference>
<dbReference type="PROSITE" id="PS00331">
    <property type="entry name" value="MALIC_ENZYMES"/>
    <property type="match status" value="1"/>
</dbReference>
<sequence>MLSTRTAAVAASASPASPWKLGGRSEGGASCDGCRTYRNTLRRRAAPAKVRALPPRRVDAVAMVSNAETETEKEQEEAAAASEELPVMPWATSVASGYTLLRDPHHNKGLAFTEEERDGHYLRGLLPPAVLSQELQIKKFMNTLRQYQTPLQRYIAMMNLQETDERLFYKLLIDNVVELLPFVYTPTVGEACQKYGSIFGRPQGLYVSLKDKGKVLEVLRNWPHRNIQVICVTDGERILGLGDLGCQGMGIPVGKLALYTALGGVDPSVCLPITIDVGTNNEFLLNDEFYIGLRQKRATGEEYDELIEEFMSAVKQFYGEKVLIQFEDFANHNAFDLLEKYSKSHLVFNDDIQGTASVVLAGLLAALKMVGGTLAEQTYLFLGAGEAGTGIAELIALEISKQTNAPIEECRKKVWLVDSKGLIVDSRKGSLQPFKKPWAHEHEPLKTLYDAVQSIKPTVLIGTSGVGRTFTKEIIEAMSSFNERPIIFSLSNPTSHSECTAEQAYTWSQGRSIFASGSPFAPVEYEGKTFVPGQSNNAYIFPGLGLGLVISGAVRVHEDMLLAASKALADQATQDNFEKGSIFPPFTSIRKISAHIAAAVAGKAYELGLATRLPPPSDLVKYAENCMYTPVYRNYR</sequence>
<proteinExistence type="evidence at protein level"/>
<gene>
    <name type="primary">MOD1</name>
    <name type="synonym">ME1</name>
</gene>
<comment type="function">
    <text evidence="6">The chloroplastic ME isoform decarboxylates malate shuttled from neighboring mesophyll cells. The CO(2) released is then refixed by ribulose-bisphosphate carboxylase. This pathway eliminates the photorespiratory loss of CO(2) that occurs in most plants.</text>
</comment>
<comment type="catalytic activity">
    <reaction evidence="6">
        <text>(S)-malate + NADP(+) = pyruvate + CO2 + NADPH</text>
        <dbReference type="Rhea" id="RHEA:18253"/>
        <dbReference type="ChEBI" id="CHEBI:15361"/>
        <dbReference type="ChEBI" id="CHEBI:15589"/>
        <dbReference type="ChEBI" id="CHEBI:16526"/>
        <dbReference type="ChEBI" id="CHEBI:57783"/>
        <dbReference type="ChEBI" id="CHEBI:58349"/>
        <dbReference type="EC" id="1.1.1.40"/>
    </reaction>
    <physiologicalReaction direction="left-to-right" evidence="6">
        <dbReference type="Rhea" id="RHEA:18254"/>
    </physiologicalReaction>
</comment>
<comment type="catalytic activity">
    <reaction>
        <text>oxaloacetate + H(+) = pyruvate + CO2</text>
        <dbReference type="Rhea" id="RHEA:15641"/>
        <dbReference type="ChEBI" id="CHEBI:15361"/>
        <dbReference type="ChEBI" id="CHEBI:15378"/>
        <dbReference type="ChEBI" id="CHEBI:16452"/>
        <dbReference type="ChEBI" id="CHEBI:16526"/>
        <dbReference type="EC" id="1.1.1.40"/>
    </reaction>
</comment>
<comment type="cofactor">
    <cofactor evidence="1">
        <name>Mg(2+)</name>
        <dbReference type="ChEBI" id="CHEBI:18420"/>
    </cofactor>
    <cofactor evidence="1">
        <name>Mn(2+)</name>
        <dbReference type="ChEBI" id="CHEBI:29035"/>
    </cofactor>
    <text evidence="1">Divalent metal cations. Prefers magnesium or manganese.</text>
</comment>
<comment type="biophysicochemical properties">
    <kinetics>
        <KM evidence="6">0.23 mM for malate</KM>
        <KM evidence="6">14.9 uM for NADP</KM>
        <text evidence="6">kcat is 28.1 sec(-1) with malate as substrate.</text>
    </kinetics>
    <phDependence>
        <text evidence="6">Optimum pH is 7.5-8.0.</text>
    </phDependence>
</comment>
<comment type="pathway">
    <text>Photosynthesis; C4 acid pathway.</text>
</comment>
<comment type="subunit">
    <text evidence="6">Homotetramer.</text>
</comment>
<comment type="subcellular location">
    <subcellularLocation>
        <location>Plastid</location>
        <location>Chloroplast</location>
    </subcellularLocation>
</comment>
<comment type="similarity">
    <text evidence="8">Belongs to the malic enzymes family.</text>
</comment>
<keyword id="KW-0002">3D-structure</keyword>
<keyword id="KW-0150">Chloroplast</keyword>
<keyword id="KW-0479">Metal-binding</keyword>
<keyword id="KW-0520">NAD</keyword>
<keyword id="KW-0521">NADP</keyword>
<keyword id="KW-0560">Oxidoreductase</keyword>
<keyword id="KW-0934">Plastid</keyword>
<keyword id="KW-1185">Reference proteome</keyword>
<keyword id="KW-0809">Transit peptide</keyword>
<feature type="transit peptide" description="Chloroplast" evidence="2">
    <location>
        <begin position="1"/>
        <end position="62"/>
    </location>
</feature>
<feature type="chain" id="PRO_0000018547" description="NADP-dependent malic enzyme, chloroplastic">
    <location>
        <begin position="63"/>
        <end position="636"/>
    </location>
</feature>
<feature type="region of interest" description="Disordered" evidence="3">
    <location>
        <begin position="1"/>
        <end position="28"/>
    </location>
</feature>
<feature type="compositionally biased region" description="Low complexity" evidence="3">
    <location>
        <begin position="7"/>
        <end position="18"/>
    </location>
</feature>
<feature type="active site" description="Proton donor" evidence="1">
    <location>
        <position position="184"/>
    </location>
</feature>
<feature type="active site" description="Proton acceptor" evidence="1">
    <location>
        <position position="255"/>
    </location>
</feature>
<feature type="binding site" evidence="1">
    <location>
        <position position="237"/>
    </location>
    <ligand>
        <name>NAD(+)</name>
        <dbReference type="ChEBI" id="CHEBI:57540"/>
    </ligand>
</feature>
<feature type="binding site" evidence="1">
    <location>
        <position position="327"/>
    </location>
    <ligand>
        <name>a divalent metal cation</name>
        <dbReference type="ChEBI" id="CHEBI:60240"/>
    </ligand>
</feature>
<feature type="binding site" evidence="1">
    <location>
        <position position="328"/>
    </location>
    <ligand>
        <name>a divalent metal cation</name>
        <dbReference type="ChEBI" id="CHEBI:60240"/>
    </ligand>
</feature>
<feature type="binding site" evidence="1">
    <location>
        <position position="351"/>
    </location>
    <ligand>
        <name>a divalent metal cation</name>
        <dbReference type="ChEBI" id="CHEBI:60240"/>
    </ligand>
</feature>
<feature type="binding site" evidence="1">
    <location>
        <position position="351"/>
    </location>
    <ligand>
        <name>NAD(+)</name>
        <dbReference type="ChEBI" id="CHEBI:57540"/>
    </ligand>
</feature>
<feature type="binding site" evidence="1">
    <location>
        <begin position="380"/>
        <end position="396"/>
    </location>
    <ligand>
        <name>NADP(+)</name>
        <dbReference type="ChEBI" id="CHEBI:58349"/>
    </ligand>
</feature>
<feature type="binding site" evidence="1">
    <location>
        <position position="492"/>
    </location>
    <ligand>
        <name>NAD(+)</name>
        <dbReference type="ChEBI" id="CHEBI:57540"/>
    </ligand>
</feature>
<feature type="site" description="Important for activity" evidence="1">
    <location>
        <position position="351"/>
    </location>
</feature>
<feature type="mutagenesis site" description="Decreases kcat 8-fold. Decreases Km for NADP 2-fold, increases Km for malate 2-fold." evidence="6">
    <original>F</original>
    <variation>I</variation>
    <location>
        <position position="140"/>
    </location>
</feature>
<feature type="mutagenesis site" description="Decreases kcat 530-fold. Increases Km for NADP 36-fold and Km for malate 10-fold." evidence="4">
    <original>R</original>
    <variation>L</variation>
    <location>
        <position position="237"/>
    </location>
</feature>
<feature type="mutagenesis site" description="Increases Km for malate 10-fold, and Km for NADP 15-fold. Decreases kcat 200-fold." evidence="5">
    <original>K</original>
    <variation>I</variation>
    <location>
        <position position="255"/>
    </location>
</feature>
<feature type="mutagenesis site" description="No effect on kcat and Km for NADP. Increases Km for malate 2-fold." evidence="6">
    <original>E</original>
    <variation>A</variation>
    <location>
        <position position="339"/>
    </location>
</feature>
<feature type="mutagenesis site" description="Decreases kcat 48-fold. Increases Km for NADP 4-fold. Increases Km for malate 6-fold." evidence="4">
    <original>A</original>
    <variation>G</variation>
    <location>
        <position position="387"/>
    </location>
</feature>
<feature type="mutagenesis site" description="No effect on kcat. Increases Km for NADP 3.5-fold. Increases Km for malate 2.5-fold." evidence="4">
    <original>A</original>
    <variation>G</variation>
    <location>
        <position position="392"/>
    </location>
</feature>
<feature type="mutagenesis site" description="No effect on kcat and on Km for malate. Increases Km for NADP 9-fold." evidence="5">
    <original>KK</original>
    <variation>LL</variation>
    <location>
        <begin position="435"/>
        <end position="436"/>
    </location>
</feature>
<feature type="mutagenesis site" description="No effect on kcat and Km for NADP. Increases Km for malate 2-fold." evidence="6">
    <original>Q</original>
    <variation>E</variation>
    <location>
        <position position="503"/>
    </location>
</feature>
<feature type="mutagenesis site" description="No effect on kcat and Km for NADP. Increases Km for malate 2-fold." evidence="6">
    <original>L</original>
    <variation>F</variation>
    <location>
        <position position="544"/>
    </location>
</feature>
<feature type="helix" evidence="9">
    <location>
        <begin position="74"/>
        <end position="83"/>
    </location>
</feature>
<feature type="strand" evidence="9">
    <location>
        <begin position="90"/>
        <end position="94"/>
    </location>
</feature>
<feature type="helix" evidence="9">
    <location>
        <begin position="97"/>
        <end position="101"/>
    </location>
</feature>
<feature type="turn" evidence="9">
    <location>
        <begin position="104"/>
        <end position="106"/>
    </location>
</feature>
<feature type="helix" evidence="9">
    <location>
        <begin position="109"/>
        <end position="111"/>
    </location>
</feature>
<feature type="helix" evidence="9">
    <location>
        <begin position="114"/>
        <end position="119"/>
    </location>
</feature>
<feature type="helix" evidence="9">
    <location>
        <begin position="133"/>
        <end position="144"/>
    </location>
</feature>
<feature type="helix" evidence="9">
    <location>
        <begin position="150"/>
        <end position="161"/>
    </location>
</feature>
<feature type="helix" evidence="9">
    <location>
        <begin position="165"/>
        <end position="174"/>
    </location>
</feature>
<feature type="helix" evidence="9">
    <location>
        <begin position="176"/>
        <end position="183"/>
    </location>
</feature>
<feature type="helix" evidence="9">
    <location>
        <begin position="187"/>
        <end position="193"/>
    </location>
</feature>
<feature type="helix" evidence="9">
    <location>
        <begin position="196"/>
        <end position="198"/>
    </location>
</feature>
<feature type="strand" evidence="9">
    <location>
        <begin position="204"/>
        <end position="208"/>
    </location>
</feature>
<feature type="helix" evidence="9">
    <location>
        <begin position="209"/>
        <end position="211"/>
    </location>
</feature>
<feature type="helix" evidence="9">
    <location>
        <begin position="215"/>
        <end position="220"/>
    </location>
</feature>
<feature type="strand" evidence="9">
    <location>
        <begin position="229"/>
        <end position="233"/>
    </location>
</feature>
<feature type="strand" evidence="9">
    <location>
        <begin position="235"/>
        <end position="237"/>
    </location>
</feature>
<feature type="helix" evidence="9">
    <location>
        <begin position="245"/>
        <end position="249"/>
    </location>
</feature>
<feature type="helix" evidence="9">
    <location>
        <begin position="250"/>
        <end position="263"/>
    </location>
</feature>
<feature type="helix" evidence="9">
    <location>
        <begin position="267"/>
        <end position="269"/>
    </location>
</feature>
<feature type="strand" evidence="9">
    <location>
        <begin position="270"/>
        <end position="276"/>
    </location>
</feature>
<feature type="helix" evidence="9">
    <location>
        <begin position="282"/>
        <end position="285"/>
    </location>
</feature>
<feature type="helix" evidence="9">
    <location>
        <begin position="300"/>
        <end position="318"/>
    </location>
</feature>
<feature type="strand" evidence="9">
    <location>
        <begin position="323"/>
        <end position="326"/>
    </location>
</feature>
<feature type="helix" evidence="9">
    <location>
        <begin position="331"/>
        <end position="341"/>
    </location>
</feature>
<feature type="turn" evidence="9">
    <location>
        <begin position="342"/>
        <end position="344"/>
    </location>
</feature>
<feature type="strand" evidence="9">
    <location>
        <begin position="345"/>
        <end position="349"/>
    </location>
</feature>
<feature type="turn" evidence="9">
    <location>
        <begin position="350"/>
        <end position="353"/>
    </location>
</feature>
<feature type="helix" evidence="9">
    <location>
        <begin position="354"/>
        <end position="370"/>
    </location>
</feature>
<feature type="strand" evidence="9">
    <location>
        <begin position="379"/>
        <end position="382"/>
    </location>
</feature>
<feature type="helix" evidence="9">
    <location>
        <begin position="386"/>
        <end position="403"/>
    </location>
</feature>
<feature type="helix" evidence="9">
    <location>
        <begin position="407"/>
        <end position="410"/>
    </location>
</feature>
<feature type="turn" evidence="9">
    <location>
        <begin position="411"/>
        <end position="413"/>
    </location>
</feature>
<feature type="strand" evidence="9">
    <location>
        <begin position="414"/>
        <end position="418"/>
    </location>
</feature>
<feature type="helix" evidence="9">
    <location>
        <begin position="425"/>
        <end position="430"/>
    </location>
</feature>
<feature type="helix" evidence="9">
    <location>
        <begin position="433"/>
        <end position="438"/>
    </location>
</feature>
<feature type="helix" evidence="9">
    <location>
        <begin position="448"/>
        <end position="455"/>
    </location>
</feature>
<feature type="strand" evidence="9">
    <location>
        <begin position="458"/>
        <end position="462"/>
    </location>
</feature>
<feature type="helix" evidence="9">
    <location>
        <begin position="472"/>
        <end position="481"/>
    </location>
</feature>
<feature type="strand" evidence="9">
    <location>
        <begin position="486"/>
        <end position="489"/>
    </location>
</feature>
<feature type="helix" evidence="9">
    <location>
        <begin position="494"/>
        <end position="496"/>
    </location>
</feature>
<feature type="helix" evidence="9">
    <location>
        <begin position="501"/>
        <end position="506"/>
    </location>
</feature>
<feature type="turn" evidence="9">
    <location>
        <begin position="507"/>
        <end position="510"/>
    </location>
</feature>
<feature type="strand" evidence="9">
    <location>
        <begin position="513"/>
        <end position="518"/>
    </location>
</feature>
<feature type="strand" evidence="9">
    <location>
        <begin position="523"/>
        <end position="525"/>
    </location>
</feature>
<feature type="strand" evidence="9">
    <location>
        <begin position="528"/>
        <end position="530"/>
    </location>
</feature>
<feature type="helix" evidence="9">
    <location>
        <begin position="537"/>
        <end position="539"/>
    </location>
</feature>
<feature type="helix" evidence="9">
    <location>
        <begin position="541"/>
        <end position="551"/>
    </location>
</feature>
<feature type="helix" evidence="9">
    <location>
        <begin position="558"/>
        <end position="569"/>
    </location>
</feature>
<feature type="helix" evidence="9">
    <location>
        <begin position="574"/>
        <end position="578"/>
    </location>
</feature>
<feature type="helix" evidence="9">
    <location>
        <begin position="586"/>
        <end position="588"/>
    </location>
</feature>
<feature type="helix" evidence="9">
    <location>
        <begin position="589"/>
        <end position="606"/>
    </location>
</feature>
<feature type="helix" evidence="9">
    <location>
        <begin position="619"/>
        <end position="626"/>
    </location>
</feature>